<proteinExistence type="inferred from homology"/>
<gene>
    <name evidence="1" type="primary">dxs</name>
    <name type="ordered locus">Dvul_1718</name>
</gene>
<accession>A1VE69</accession>
<organism>
    <name type="scientific">Nitratidesulfovibrio vulgaris (strain DP4)</name>
    <name type="common">Desulfovibrio vulgaris</name>
    <dbReference type="NCBI Taxonomy" id="391774"/>
    <lineage>
        <taxon>Bacteria</taxon>
        <taxon>Pseudomonadati</taxon>
        <taxon>Thermodesulfobacteriota</taxon>
        <taxon>Desulfovibrionia</taxon>
        <taxon>Desulfovibrionales</taxon>
        <taxon>Desulfovibrionaceae</taxon>
        <taxon>Nitratidesulfovibrio</taxon>
    </lineage>
</organism>
<name>DXS_NITV4</name>
<protein>
    <recommendedName>
        <fullName evidence="1">1-deoxy-D-xylulose-5-phosphate synthase</fullName>
        <ecNumber evidence="1">2.2.1.7</ecNumber>
    </recommendedName>
    <alternativeName>
        <fullName evidence="1">1-deoxyxylulose-5-phosphate synthase</fullName>
        <shortName evidence="1">DXP synthase</shortName>
        <shortName evidence="1">DXPS</shortName>
    </alternativeName>
</protein>
<feature type="chain" id="PRO_1000019021" description="1-deoxy-D-xylulose-5-phosphate synthase">
    <location>
        <begin position="1"/>
        <end position="641"/>
    </location>
</feature>
<feature type="binding site" evidence="1">
    <location>
        <position position="79"/>
    </location>
    <ligand>
        <name>thiamine diphosphate</name>
        <dbReference type="ChEBI" id="CHEBI:58937"/>
    </ligand>
</feature>
<feature type="binding site" evidence="1">
    <location>
        <begin position="120"/>
        <end position="122"/>
    </location>
    <ligand>
        <name>thiamine diphosphate</name>
        <dbReference type="ChEBI" id="CHEBI:58937"/>
    </ligand>
</feature>
<feature type="binding site" evidence="1">
    <location>
        <position position="151"/>
    </location>
    <ligand>
        <name>Mg(2+)</name>
        <dbReference type="ChEBI" id="CHEBI:18420"/>
    </ligand>
</feature>
<feature type="binding site" evidence="1">
    <location>
        <begin position="152"/>
        <end position="153"/>
    </location>
    <ligand>
        <name>thiamine diphosphate</name>
        <dbReference type="ChEBI" id="CHEBI:58937"/>
    </ligand>
</feature>
<feature type="binding site" evidence="1">
    <location>
        <position position="180"/>
    </location>
    <ligand>
        <name>Mg(2+)</name>
        <dbReference type="ChEBI" id="CHEBI:18420"/>
    </ligand>
</feature>
<feature type="binding site" evidence="1">
    <location>
        <position position="180"/>
    </location>
    <ligand>
        <name>thiamine diphosphate</name>
        <dbReference type="ChEBI" id="CHEBI:58937"/>
    </ligand>
</feature>
<feature type="binding site" evidence="1">
    <location>
        <position position="291"/>
    </location>
    <ligand>
        <name>thiamine diphosphate</name>
        <dbReference type="ChEBI" id="CHEBI:58937"/>
    </ligand>
</feature>
<feature type="binding site" evidence="1">
    <location>
        <position position="375"/>
    </location>
    <ligand>
        <name>thiamine diphosphate</name>
        <dbReference type="ChEBI" id="CHEBI:58937"/>
    </ligand>
</feature>
<keyword id="KW-0414">Isoprene biosynthesis</keyword>
<keyword id="KW-0460">Magnesium</keyword>
<keyword id="KW-0479">Metal-binding</keyword>
<keyword id="KW-0784">Thiamine biosynthesis</keyword>
<keyword id="KW-0786">Thiamine pyrophosphate</keyword>
<keyword id="KW-0808">Transferase</keyword>
<dbReference type="EC" id="2.2.1.7" evidence="1"/>
<dbReference type="EMBL" id="CP000527">
    <property type="protein sequence ID" value="ABM28735.1"/>
    <property type="molecule type" value="Genomic_DNA"/>
</dbReference>
<dbReference type="RefSeq" id="WP_010938645.1">
    <property type="nucleotide sequence ID" value="NC_008751.1"/>
</dbReference>
<dbReference type="SMR" id="A1VE69"/>
<dbReference type="KEGG" id="dvl:Dvul_1718"/>
<dbReference type="HOGENOM" id="CLU_009227_1_4_7"/>
<dbReference type="UniPathway" id="UPA00064">
    <property type="reaction ID" value="UER00091"/>
</dbReference>
<dbReference type="Proteomes" id="UP000009173">
    <property type="component" value="Chromosome"/>
</dbReference>
<dbReference type="GO" id="GO:0005829">
    <property type="term" value="C:cytosol"/>
    <property type="evidence" value="ECO:0007669"/>
    <property type="project" value="TreeGrafter"/>
</dbReference>
<dbReference type="GO" id="GO:0008661">
    <property type="term" value="F:1-deoxy-D-xylulose-5-phosphate synthase activity"/>
    <property type="evidence" value="ECO:0007669"/>
    <property type="project" value="UniProtKB-UniRule"/>
</dbReference>
<dbReference type="GO" id="GO:0000287">
    <property type="term" value="F:magnesium ion binding"/>
    <property type="evidence" value="ECO:0007669"/>
    <property type="project" value="UniProtKB-UniRule"/>
</dbReference>
<dbReference type="GO" id="GO:0030976">
    <property type="term" value="F:thiamine pyrophosphate binding"/>
    <property type="evidence" value="ECO:0007669"/>
    <property type="project" value="UniProtKB-UniRule"/>
</dbReference>
<dbReference type="GO" id="GO:0052865">
    <property type="term" value="P:1-deoxy-D-xylulose 5-phosphate biosynthetic process"/>
    <property type="evidence" value="ECO:0007669"/>
    <property type="project" value="UniProtKB-UniPathway"/>
</dbReference>
<dbReference type="GO" id="GO:0019288">
    <property type="term" value="P:isopentenyl diphosphate biosynthetic process, methylerythritol 4-phosphate pathway"/>
    <property type="evidence" value="ECO:0007669"/>
    <property type="project" value="TreeGrafter"/>
</dbReference>
<dbReference type="GO" id="GO:0016114">
    <property type="term" value="P:terpenoid biosynthetic process"/>
    <property type="evidence" value="ECO:0007669"/>
    <property type="project" value="UniProtKB-UniRule"/>
</dbReference>
<dbReference type="GO" id="GO:0009228">
    <property type="term" value="P:thiamine biosynthetic process"/>
    <property type="evidence" value="ECO:0007669"/>
    <property type="project" value="UniProtKB-UniRule"/>
</dbReference>
<dbReference type="CDD" id="cd02007">
    <property type="entry name" value="TPP_DXS"/>
    <property type="match status" value="1"/>
</dbReference>
<dbReference type="CDD" id="cd07033">
    <property type="entry name" value="TPP_PYR_DXS_TK_like"/>
    <property type="match status" value="1"/>
</dbReference>
<dbReference type="FunFam" id="3.40.50.970:FF:000005">
    <property type="entry name" value="1-deoxy-D-xylulose-5-phosphate synthase"/>
    <property type="match status" value="1"/>
</dbReference>
<dbReference type="Gene3D" id="3.40.50.920">
    <property type="match status" value="1"/>
</dbReference>
<dbReference type="Gene3D" id="3.40.50.970">
    <property type="match status" value="2"/>
</dbReference>
<dbReference type="HAMAP" id="MF_00315">
    <property type="entry name" value="DXP_synth"/>
    <property type="match status" value="1"/>
</dbReference>
<dbReference type="InterPro" id="IPR005477">
    <property type="entry name" value="Dxylulose-5-P_synthase"/>
</dbReference>
<dbReference type="InterPro" id="IPR029061">
    <property type="entry name" value="THDP-binding"/>
</dbReference>
<dbReference type="InterPro" id="IPR009014">
    <property type="entry name" value="Transketo_C/PFOR_II"/>
</dbReference>
<dbReference type="InterPro" id="IPR005475">
    <property type="entry name" value="Transketolase-like_Pyr-bd"/>
</dbReference>
<dbReference type="InterPro" id="IPR020826">
    <property type="entry name" value="Transketolase_BS"/>
</dbReference>
<dbReference type="InterPro" id="IPR033248">
    <property type="entry name" value="Transketolase_C"/>
</dbReference>
<dbReference type="InterPro" id="IPR049557">
    <property type="entry name" value="Transketolase_CS"/>
</dbReference>
<dbReference type="NCBIfam" id="TIGR00204">
    <property type="entry name" value="dxs"/>
    <property type="match status" value="1"/>
</dbReference>
<dbReference type="NCBIfam" id="NF003933">
    <property type="entry name" value="PRK05444.2-2"/>
    <property type="match status" value="1"/>
</dbReference>
<dbReference type="PANTHER" id="PTHR43322">
    <property type="entry name" value="1-D-DEOXYXYLULOSE 5-PHOSPHATE SYNTHASE-RELATED"/>
    <property type="match status" value="1"/>
</dbReference>
<dbReference type="PANTHER" id="PTHR43322:SF5">
    <property type="entry name" value="1-DEOXY-D-XYLULOSE-5-PHOSPHATE SYNTHASE, CHLOROPLASTIC"/>
    <property type="match status" value="1"/>
</dbReference>
<dbReference type="Pfam" id="PF13292">
    <property type="entry name" value="DXP_synthase_N"/>
    <property type="match status" value="1"/>
</dbReference>
<dbReference type="Pfam" id="PF02779">
    <property type="entry name" value="Transket_pyr"/>
    <property type="match status" value="1"/>
</dbReference>
<dbReference type="Pfam" id="PF02780">
    <property type="entry name" value="Transketolase_C"/>
    <property type="match status" value="1"/>
</dbReference>
<dbReference type="SMART" id="SM00861">
    <property type="entry name" value="Transket_pyr"/>
    <property type="match status" value="1"/>
</dbReference>
<dbReference type="SUPFAM" id="SSF52518">
    <property type="entry name" value="Thiamin diphosphate-binding fold (THDP-binding)"/>
    <property type="match status" value="2"/>
</dbReference>
<dbReference type="SUPFAM" id="SSF52922">
    <property type="entry name" value="TK C-terminal domain-like"/>
    <property type="match status" value="1"/>
</dbReference>
<dbReference type="PROSITE" id="PS00801">
    <property type="entry name" value="TRANSKETOLASE_1"/>
    <property type="match status" value="1"/>
</dbReference>
<dbReference type="PROSITE" id="PS00802">
    <property type="entry name" value="TRANSKETOLASE_2"/>
    <property type="match status" value="1"/>
</dbReference>
<reference key="1">
    <citation type="journal article" date="2009" name="Environ. Microbiol.">
        <title>Contribution of mobile genetic elements to Desulfovibrio vulgaris genome plasticity.</title>
        <authorList>
            <person name="Walker C.B."/>
            <person name="Stolyar S."/>
            <person name="Chivian D."/>
            <person name="Pinel N."/>
            <person name="Gabster J.A."/>
            <person name="Dehal P.S."/>
            <person name="He Z."/>
            <person name="Yang Z.K."/>
            <person name="Yen H.C."/>
            <person name="Zhou J."/>
            <person name="Wall J.D."/>
            <person name="Hazen T.C."/>
            <person name="Arkin A.P."/>
            <person name="Stahl D.A."/>
        </authorList>
    </citation>
    <scope>NUCLEOTIDE SEQUENCE [LARGE SCALE GENOMIC DNA]</scope>
    <source>
        <strain>DP4</strain>
    </source>
</reference>
<evidence type="ECO:0000255" key="1">
    <source>
        <dbReference type="HAMAP-Rule" id="MF_00315"/>
    </source>
</evidence>
<sequence>MTDSTIPGLLARIQRPTDVAGLSADDLRTLAADLRTAIIDTVSKNGGHLAPSLGVVELTLAMLSTFDPGKDKVVWDVGHQAYAWKLLTGRAADFHTLRRRHGISGFPKPCESEYDHFGVGHSSTSISAALGMALARDLAGDDHHVVAVIGDGSLTAGLAFEGLNQAGDMGRRLIVILNDNEMSISRNVGALSLFLSRNLSKGWARRVKRDVETALKSIPGIGDEMVAYAKRSEHSLKSFFTPGMLFEAFQFNYIGPVDGHDVKALVRNLELAKTNDRPVLLHVLTRKGKGYTPAEANPAFFHGVGRFEPETGRARKPGDTPVLPTYTDVFGETLCRLADMDERIVAITAAMPEGTGTNCFRERHPDRFVDVGICEQHAVTFAAGLAIQGYRPFVAIYSTFLQRSYDQIVHDVCIQKLPVVLCLDRAGLVGEDGPTHHGAFDLSFLRHIPHMSIIAPRDEADLQAAMYTALHLDAPLAIRYPRGVGFGIPLAESPSPLPVGVGEVLKEGEGVAVIAVGSRVHPSLEAAERLAEETGRHATVFDARWVKPLPEAQLLDIVARHDALLFVEENALAGGFSSAVLELLADRNALSGKHIRRIGLPDEFVEQGTQKELRVSLGLCMDGVGKALKELFAAVGNATAS</sequence>
<comment type="function">
    <text evidence="1">Catalyzes the acyloin condensation reaction between C atoms 2 and 3 of pyruvate and glyceraldehyde 3-phosphate to yield 1-deoxy-D-xylulose-5-phosphate (DXP).</text>
</comment>
<comment type="catalytic activity">
    <reaction evidence="1">
        <text>D-glyceraldehyde 3-phosphate + pyruvate + H(+) = 1-deoxy-D-xylulose 5-phosphate + CO2</text>
        <dbReference type="Rhea" id="RHEA:12605"/>
        <dbReference type="ChEBI" id="CHEBI:15361"/>
        <dbReference type="ChEBI" id="CHEBI:15378"/>
        <dbReference type="ChEBI" id="CHEBI:16526"/>
        <dbReference type="ChEBI" id="CHEBI:57792"/>
        <dbReference type="ChEBI" id="CHEBI:59776"/>
        <dbReference type="EC" id="2.2.1.7"/>
    </reaction>
</comment>
<comment type="cofactor">
    <cofactor evidence="1">
        <name>Mg(2+)</name>
        <dbReference type="ChEBI" id="CHEBI:18420"/>
    </cofactor>
    <text evidence="1">Binds 1 Mg(2+) ion per subunit.</text>
</comment>
<comment type="cofactor">
    <cofactor evidence="1">
        <name>thiamine diphosphate</name>
        <dbReference type="ChEBI" id="CHEBI:58937"/>
    </cofactor>
    <text evidence="1">Binds 1 thiamine pyrophosphate per subunit.</text>
</comment>
<comment type="pathway">
    <text evidence="1">Metabolic intermediate biosynthesis; 1-deoxy-D-xylulose 5-phosphate biosynthesis; 1-deoxy-D-xylulose 5-phosphate from D-glyceraldehyde 3-phosphate and pyruvate: step 1/1.</text>
</comment>
<comment type="subunit">
    <text evidence="1">Homodimer.</text>
</comment>
<comment type="similarity">
    <text evidence="1">Belongs to the transketolase family. DXPS subfamily.</text>
</comment>